<comment type="function">
    <text evidence="1">Bifunctional serine/threonine kinase and phosphorylase involved in the regulation of the phosphoenolpyruvate synthase (PEPS) by catalyzing its phosphorylation/dephosphorylation.</text>
</comment>
<comment type="catalytic activity">
    <reaction evidence="1">
        <text>[pyruvate, water dikinase] + ADP = [pyruvate, water dikinase]-phosphate + AMP + H(+)</text>
        <dbReference type="Rhea" id="RHEA:46020"/>
        <dbReference type="Rhea" id="RHEA-COMP:11425"/>
        <dbReference type="Rhea" id="RHEA-COMP:11426"/>
        <dbReference type="ChEBI" id="CHEBI:15378"/>
        <dbReference type="ChEBI" id="CHEBI:43176"/>
        <dbReference type="ChEBI" id="CHEBI:68546"/>
        <dbReference type="ChEBI" id="CHEBI:456215"/>
        <dbReference type="ChEBI" id="CHEBI:456216"/>
        <dbReference type="EC" id="2.7.11.33"/>
    </reaction>
</comment>
<comment type="catalytic activity">
    <reaction evidence="1">
        <text>[pyruvate, water dikinase]-phosphate + phosphate + H(+) = [pyruvate, water dikinase] + diphosphate</text>
        <dbReference type="Rhea" id="RHEA:48580"/>
        <dbReference type="Rhea" id="RHEA-COMP:11425"/>
        <dbReference type="Rhea" id="RHEA-COMP:11426"/>
        <dbReference type="ChEBI" id="CHEBI:15378"/>
        <dbReference type="ChEBI" id="CHEBI:33019"/>
        <dbReference type="ChEBI" id="CHEBI:43176"/>
        <dbReference type="ChEBI" id="CHEBI:43474"/>
        <dbReference type="ChEBI" id="CHEBI:68546"/>
        <dbReference type="EC" id="2.7.4.28"/>
    </reaction>
</comment>
<comment type="similarity">
    <text evidence="1">Belongs to the pyruvate, phosphate/water dikinase regulatory protein family. PSRP subfamily.</text>
</comment>
<feature type="chain" id="PRO_0000316734" description="Putative phosphoenolpyruvate synthase regulatory protein">
    <location>
        <begin position="1"/>
        <end position="270"/>
    </location>
</feature>
<feature type="binding site" evidence="1">
    <location>
        <begin position="150"/>
        <end position="157"/>
    </location>
    <ligand>
        <name>ADP</name>
        <dbReference type="ChEBI" id="CHEBI:456216"/>
    </ligand>
</feature>
<sequence>MAPRVFYISDGTAITAEVFGHAVLSQFPIEFEALTIPFVETLVKAEKVKLQINDCFITTGERPLVFHSIVNPDIRNVIYSSEGMDYDFLNTFVAPLEQHLGIQACPVLHRTHGKGNHSYEARIDAINFSMENDDGQTMKHMDKADIILLGVSRCGKTPSSLYLSMQFGIKAANYPFTEDDMDNLKLPDALKRNKNKLFGLTIDPNRLHEIRQSRMENSRYSSLRQCRLEVKEVEMMYKRERIPFVDTTNHSVEEIATKILDVTGLARHMF</sequence>
<name>PSRP_SHEDO</name>
<gene>
    <name type="ordered locus">Sden_2010</name>
</gene>
<keyword id="KW-0418">Kinase</keyword>
<keyword id="KW-0547">Nucleotide-binding</keyword>
<keyword id="KW-1185">Reference proteome</keyword>
<keyword id="KW-0723">Serine/threonine-protein kinase</keyword>
<keyword id="KW-0808">Transferase</keyword>
<dbReference type="EC" id="2.7.11.33" evidence="1"/>
<dbReference type="EC" id="2.7.4.28" evidence="1"/>
<dbReference type="EMBL" id="CP000302">
    <property type="protein sequence ID" value="ABE55293.1"/>
    <property type="molecule type" value="Genomic_DNA"/>
</dbReference>
<dbReference type="RefSeq" id="WP_011496449.1">
    <property type="nucleotide sequence ID" value="NC_007954.1"/>
</dbReference>
<dbReference type="SMR" id="Q12MN3"/>
<dbReference type="STRING" id="318161.Sden_2010"/>
<dbReference type="KEGG" id="sdn:Sden_2010"/>
<dbReference type="eggNOG" id="COG1806">
    <property type="taxonomic scope" value="Bacteria"/>
</dbReference>
<dbReference type="HOGENOM" id="CLU_046206_1_0_6"/>
<dbReference type="OrthoDB" id="9782201at2"/>
<dbReference type="Proteomes" id="UP000001982">
    <property type="component" value="Chromosome"/>
</dbReference>
<dbReference type="GO" id="GO:0043531">
    <property type="term" value="F:ADP binding"/>
    <property type="evidence" value="ECO:0007669"/>
    <property type="project" value="UniProtKB-UniRule"/>
</dbReference>
<dbReference type="GO" id="GO:0005524">
    <property type="term" value="F:ATP binding"/>
    <property type="evidence" value="ECO:0007669"/>
    <property type="project" value="InterPro"/>
</dbReference>
<dbReference type="GO" id="GO:0016776">
    <property type="term" value="F:phosphotransferase activity, phosphate group as acceptor"/>
    <property type="evidence" value="ECO:0007669"/>
    <property type="project" value="UniProtKB-UniRule"/>
</dbReference>
<dbReference type="GO" id="GO:0004674">
    <property type="term" value="F:protein serine/threonine kinase activity"/>
    <property type="evidence" value="ECO:0007669"/>
    <property type="project" value="UniProtKB-UniRule"/>
</dbReference>
<dbReference type="HAMAP" id="MF_01062">
    <property type="entry name" value="PSRP"/>
    <property type="match status" value="1"/>
</dbReference>
<dbReference type="InterPro" id="IPR005177">
    <property type="entry name" value="Kinase-pyrophosphorylase"/>
</dbReference>
<dbReference type="InterPro" id="IPR026530">
    <property type="entry name" value="PSRP"/>
</dbReference>
<dbReference type="NCBIfam" id="NF003742">
    <property type="entry name" value="PRK05339.1"/>
    <property type="match status" value="1"/>
</dbReference>
<dbReference type="PANTHER" id="PTHR31756">
    <property type="entry name" value="PYRUVATE, PHOSPHATE DIKINASE REGULATORY PROTEIN 1, CHLOROPLASTIC"/>
    <property type="match status" value="1"/>
</dbReference>
<dbReference type="PANTHER" id="PTHR31756:SF3">
    <property type="entry name" value="PYRUVATE, PHOSPHATE DIKINASE REGULATORY PROTEIN 1, CHLOROPLASTIC"/>
    <property type="match status" value="1"/>
</dbReference>
<dbReference type="Pfam" id="PF03618">
    <property type="entry name" value="Kinase-PPPase"/>
    <property type="match status" value="1"/>
</dbReference>
<protein>
    <recommendedName>
        <fullName evidence="1">Putative phosphoenolpyruvate synthase regulatory protein</fullName>
        <shortName evidence="1">PEP synthase regulatory protein</shortName>
        <shortName evidence="1">PSRP</shortName>
        <ecNumber evidence="1">2.7.11.33</ecNumber>
        <ecNumber evidence="1">2.7.4.28</ecNumber>
    </recommendedName>
    <alternativeName>
        <fullName evidence="1">Pyruvate, water dikinase regulatory protein</fullName>
    </alternativeName>
</protein>
<reference key="1">
    <citation type="submission" date="2006-03" db="EMBL/GenBank/DDBJ databases">
        <title>Complete sequence of Shewanella denitrificans OS217.</title>
        <authorList>
            <consortium name="US DOE Joint Genome Institute"/>
            <person name="Copeland A."/>
            <person name="Lucas S."/>
            <person name="Lapidus A."/>
            <person name="Barry K."/>
            <person name="Detter J.C."/>
            <person name="Glavina del Rio T."/>
            <person name="Hammon N."/>
            <person name="Israni S."/>
            <person name="Dalin E."/>
            <person name="Tice H."/>
            <person name="Pitluck S."/>
            <person name="Brettin T."/>
            <person name="Bruce D."/>
            <person name="Han C."/>
            <person name="Tapia R."/>
            <person name="Gilna P."/>
            <person name="Kiss H."/>
            <person name="Schmutz J."/>
            <person name="Larimer F."/>
            <person name="Land M."/>
            <person name="Hauser L."/>
            <person name="Kyrpides N."/>
            <person name="Lykidis A."/>
            <person name="Richardson P."/>
        </authorList>
    </citation>
    <scope>NUCLEOTIDE SEQUENCE [LARGE SCALE GENOMIC DNA]</scope>
    <source>
        <strain>OS217 / ATCC BAA-1090 / DSM 15013</strain>
    </source>
</reference>
<proteinExistence type="inferred from homology"/>
<accession>Q12MN3</accession>
<evidence type="ECO:0000255" key="1">
    <source>
        <dbReference type="HAMAP-Rule" id="MF_01062"/>
    </source>
</evidence>
<organism>
    <name type="scientific">Shewanella denitrificans (strain OS217 / ATCC BAA-1090 / DSM 15013)</name>
    <dbReference type="NCBI Taxonomy" id="318161"/>
    <lineage>
        <taxon>Bacteria</taxon>
        <taxon>Pseudomonadati</taxon>
        <taxon>Pseudomonadota</taxon>
        <taxon>Gammaproteobacteria</taxon>
        <taxon>Alteromonadales</taxon>
        <taxon>Shewanellaceae</taxon>
        <taxon>Shewanella</taxon>
    </lineage>
</organism>